<comment type="function">
    <text evidence="1">Protein S19 forms a complex with S13 that binds strongly to the 16S ribosomal RNA.</text>
</comment>
<comment type="similarity">
    <text evidence="1">Belongs to the universal ribosomal protein uS19 family.</text>
</comment>
<name>RS19_POLNA</name>
<protein>
    <recommendedName>
        <fullName evidence="1">Small ribosomal subunit protein uS19</fullName>
    </recommendedName>
    <alternativeName>
        <fullName evidence="2">30S ribosomal protein S19</fullName>
    </alternativeName>
</protein>
<accession>A1VIQ4</accession>
<reference key="1">
    <citation type="journal article" date="2009" name="Environ. Microbiol.">
        <title>The genome of Polaromonas naphthalenivorans strain CJ2, isolated from coal tar-contaminated sediment, reveals physiological and metabolic versatility and evolution through extensive horizontal gene transfer.</title>
        <authorList>
            <person name="Yagi J.M."/>
            <person name="Sims D."/>
            <person name="Brettin T."/>
            <person name="Bruce D."/>
            <person name="Madsen E.L."/>
        </authorList>
    </citation>
    <scope>NUCLEOTIDE SEQUENCE [LARGE SCALE GENOMIC DNA]</scope>
    <source>
        <strain>CJ2</strain>
    </source>
</reference>
<evidence type="ECO:0000255" key="1">
    <source>
        <dbReference type="HAMAP-Rule" id="MF_00531"/>
    </source>
</evidence>
<evidence type="ECO:0000305" key="2"/>
<feature type="chain" id="PRO_1000051096" description="Small ribosomal subunit protein uS19">
    <location>
        <begin position="1"/>
        <end position="92"/>
    </location>
</feature>
<sequence length="92" mass="10426">MTRSLKKGPFVDHHLVAKADKAVTNKDKKPIKTWSRRSMILPEFIGLTIAVHNGKQHVPVYITDQMVGHKLGEFALTRTFKGHPADKKVVRK</sequence>
<gene>
    <name evidence="1" type="primary">rpsS</name>
    <name type="ordered locus">Pnap_0207</name>
</gene>
<keyword id="KW-1185">Reference proteome</keyword>
<keyword id="KW-0687">Ribonucleoprotein</keyword>
<keyword id="KW-0689">Ribosomal protein</keyword>
<keyword id="KW-0694">RNA-binding</keyword>
<keyword id="KW-0699">rRNA-binding</keyword>
<proteinExistence type="inferred from homology"/>
<dbReference type="EMBL" id="CP000529">
    <property type="protein sequence ID" value="ABM35532.1"/>
    <property type="molecule type" value="Genomic_DNA"/>
</dbReference>
<dbReference type="RefSeq" id="WP_007866503.1">
    <property type="nucleotide sequence ID" value="NC_008781.1"/>
</dbReference>
<dbReference type="SMR" id="A1VIQ4"/>
<dbReference type="STRING" id="365044.Pnap_0207"/>
<dbReference type="KEGG" id="pna:Pnap_0207"/>
<dbReference type="eggNOG" id="COG0185">
    <property type="taxonomic scope" value="Bacteria"/>
</dbReference>
<dbReference type="HOGENOM" id="CLU_144911_0_1_4"/>
<dbReference type="OrthoDB" id="9797833at2"/>
<dbReference type="Proteomes" id="UP000000644">
    <property type="component" value="Chromosome"/>
</dbReference>
<dbReference type="GO" id="GO:0005737">
    <property type="term" value="C:cytoplasm"/>
    <property type="evidence" value="ECO:0007669"/>
    <property type="project" value="UniProtKB-ARBA"/>
</dbReference>
<dbReference type="GO" id="GO:0015935">
    <property type="term" value="C:small ribosomal subunit"/>
    <property type="evidence" value="ECO:0007669"/>
    <property type="project" value="InterPro"/>
</dbReference>
<dbReference type="GO" id="GO:0019843">
    <property type="term" value="F:rRNA binding"/>
    <property type="evidence" value="ECO:0007669"/>
    <property type="project" value="UniProtKB-UniRule"/>
</dbReference>
<dbReference type="GO" id="GO:0003735">
    <property type="term" value="F:structural constituent of ribosome"/>
    <property type="evidence" value="ECO:0007669"/>
    <property type="project" value="InterPro"/>
</dbReference>
<dbReference type="GO" id="GO:0000028">
    <property type="term" value="P:ribosomal small subunit assembly"/>
    <property type="evidence" value="ECO:0007669"/>
    <property type="project" value="TreeGrafter"/>
</dbReference>
<dbReference type="GO" id="GO:0006412">
    <property type="term" value="P:translation"/>
    <property type="evidence" value="ECO:0007669"/>
    <property type="project" value="UniProtKB-UniRule"/>
</dbReference>
<dbReference type="FunFam" id="3.30.860.10:FF:000001">
    <property type="entry name" value="30S ribosomal protein S19"/>
    <property type="match status" value="1"/>
</dbReference>
<dbReference type="Gene3D" id="3.30.860.10">
    <property type="entry name" value="30s Ribosomal Protein S19, Chain A"/>
    <property type="match status" value="1"/>
</dbReference>
<dbReference type="HAMAP" id="MF_00531">
    <property type="entry name" value="Ribosomal_uS19"/>
    <property type="match status" value="1"/>
</dbReference>
<dbReference type="InterPro" id="IPR002222">
    <property type="entry name" value="Ribosomal_uS19"/>
</dbReference>
<dbReference type="InterPro" id="IPR005732">
    <property type="entry name" value="Ribosomal_uS19_bac-type"/>
</dbReference>
<dbReference type="InterPro" id="IPR020934">
    <property type="entry name" value="Ribosomal_uS19_CS"/>
</dbReference>
<dbReference type="InterPro" id="IPR023575">
    <property type="entry name" value="Ribosomal_uS19_SF"/>
</dbReference>
<dbReference type="NCBIfam" id="TIGR01050">
    <property type="entry name" value="rpsS_bact"/>
    <property type="match status" value="1"/>
</dbReference>
<dbReference type="PANTHER" id="PTHR11880">
    <property type="entry name" value="RIBOSOMAL PROTEIN S19P FAMILY MEMBER"/>
    <property type="match status" value="1"/>
</dbReference>
<dbReference type="PANTHER" id="PTHR11880:SF8">
    <property type="entry name" value="SMALL RIBOSOMAL SUBUNIT PROTEIN US19M"/>
    <property type="match status" value="1"/>
</dbReference>
<dbReference type="Pfam" id="PF00203">
    <property type="entry name" value="Ribosomal_S19"/>
    <property type="match status" value="1"/>
</dbReference>
<dbReference type="PIRSF" id="PIRSF002144">
    <property type="entry name" value="Ribosomal_S19"/>
    <property type="match status" value="1"/>
</dbReference>
<dbReference type="PRINTS" id="PR00975">
    <property type="entry name" value="RIBOSOMALS19"/>
</dbReference>
<dbReference type="SUPFAM" id="SSF54570">
    <property type="entry name" value="Ribosomal protein S19"/>
    <property type="match status" value="1"/>
</dbReference>
<dbReference type="PROSITE" id="PS00323">
    <property type="entry name" value="RIBOSOMAL_S19"/>
    <property type="match status" value="1"/>
</dbReference>
<organism>
    <name type="scientific">Polaromonas naphthalenivorans (strain CJ2)</name>
    <dbReference type="NCBI Taxonomy" id="365044"/>
    <lineage>
        <taxon>Bacteria</taxon>
        <taxon>Pseudomonadati</taxon>
        <taxon>Pseudomonadota</taxon>
        <taxon>Betaproteobacteria</taxon>
        <taxon>Burkholderiales</taxon>
        <taxon>Comamonadaceae</taxon>
        <taxon>Polaromonas</taxon>
    </lineage>
</organism>